<protein>
    <recommendedName>
        <fullName evidence="1">Deoxyribose-phosphate aldolase</fullName>
        <shortName evidence="1">DERA</shortName>
        <ecNumber evidence="1">4.1.2.4</ecNumber>
    </recommendedName>
    <alternativeName>
        <fullName evidence="1">2-deoxy-D-ribose 5-phosphate aldolase</fullName>
    </alternativeName>
    <alternativeName>
        <fullName evidence="1">Phosphodeoxyriboaldolase</fullName>
        <shortName evidence="1">Deoxyriboaldolase</shortName>
    </alternativeName>
</protein>
<feature type="chain" id="PRO_0000057227" description="Deoxyribose-phosphate aldolase">
    <location>
        <begin position="1"/>
        <end position="224"/>
    </location>
</feature>
<feature type="active site" description="Proton donor/acceptor" evidence="1">
    <location>
        <position position="92"/>
    </location>
</feature>
<feature type="active site" description="Schiff-base intermediate with acetaldehyde" evidence="1">
    <location>
        <position position="155"/>
    </location>
</feature>
<feature type="active site" description="Proton donor/acceptor" evidence="1">
    <location>
        <position position="184"/>
    </location>
</feature>
<proteinExistence type="inferred from homology"/>
<name>DEOC_CLOPE</name>
<evidence type="ECO:0000255" key="1">
    <source>
        <dbReference type="HAMAP-Rule" id="MF_00114"/>
    </source>
</evidence>
<gene>
    <name evidence="1" type="primary">deoC</name>
    <name type="ordered locus">CPE2052</name>
</gene>
<keyword id="KW-0963">Cytoplasm</keyword>
<keyword id="KW-0456">Lyase</keyword>
<keyword id="KW-1185">Reference proteome</keyword>
<keyword id="KW-0704">Schiff base</keyword>
<reference key="1">
    <citation type="journal article" date="2002" name="Proc. Natl. Acad. Sci. U.S.A.">
        <title>Complete genome sequence of Clostridium perfringens, an anaerobic flesh-eater.</title>
        <authorList>
            <person name="Shimizu T."/>
            <person name="Ohtani K."/>
            <person name="Hirakawa H."/>
            <person name="Ohshima K."/>
            <person name="Yamashita A."/>
            <person name="Shiba T."/>
            <person name="Ogasawara N."/>
            <person name="Hattori M."/>
            <person name="Kuhara S."/>
            <person name="Hayashi H."/>
        </authorList>
    </citation>
    <scope>NUCLEOTIDE SEQUENCE [LARGE SCALE GENOMIC DNA]</scope>
    <source>
        <strain>13 / Type A</strain>
    </source>
</reference>
<organism>
    <name type="scientific">Clostridium perfringens (strain 13 / Type A)</name>
    <dbReference type="NCBI Taxonomy" id="195102"/>
    <lineage>
        <taxon>Bacteria</taxon>
        <taxon>Bacillati</taxon>
        <taxon>Bacillota</taxon>
        <taxon>Clostridia</taxon>
        <taxon>Eubacteriales</taxon>
        <taxon>Clostridiaceae</taxon>
        <taxon>Clostridium</taxon>
    </lineage>
</organism>
<accession>Q8XIR2</accession>
<comment type="function">
    <text evidence="1">Catalyzes a reversible aldol reaction between acetaldehyde and D-glyceraldehyde 3-phosphate to generate 2-deoxy-D-ribose 5-phosphate.</text>
</comment>
<comment type="catalytic activity">
    <reaction evidence="1">
        <text>2-deoxy-D-ribose 5-phosphate = D-glyceraldehyde 3-phosphate + acetaldehyde</text>
        <dbReference type="Rhea" id="RHEA:12821"/>
        <dbReference type="ChEBI" id="CHEBI:15343"/>
        <dbReference type="ChEBI" id="CHEBI:59776"/>
        <dbReference type="ChEBI" id="CHEBI:62877"/>
        <dbReference type="EC" id="4.1.2.4"/>
    </reaction>
</comment>
<comment type="pathway">
    <text evidence="1">Carbohydrate degradation; 2-deoxy-D-ribose 1-phosphate degradation; D-glyceraldehyde 3-phosphate and acetaldehyde from 2-deoxy-alpha-D-ribose 1-phosphate: step 2/2.</text>
</comment>
<comment type="subcellular location">
    <subcellularLocation>
        <location evidence="1">Cytoplasm</location>
    </subcellularLocation>
</comment>
<comment type="similarity">
    <text evidence="1">Belongs to the DeoC/FbaB aldolase family. DeoC type 1 subfamily.</text>
</comment>
<dbReference type="EC" id="4.1.2.4" evidence="1"/>
<dbReference type="EMBL" id="BA000016">
    <property type="protein sequence ID" value="BAB81758.1"/>
    <property type="molecule type" value="Genomic_DNA"/>
</dbReference>
<dbReference type="RefSeq" id="WP_003470931.1">
    <property type="nucleotide sequence ID" value="NC_003366.1"/>
</dbReference>
<dbReference type="SMR" id="Q8XIR2"/>
<dbReference type="STRING" id="195102.gene:10491322"/>
<dbReference type="GeneID" id="93001410"/>
<dbReference type="KEGG" id="cpe:CPE2052"/>
<dbReference type="HOGENOM" id="CLU_053595_0_1_9"/>
<dbReference type="UniPathway" id="UPA00002">
    <property type="reaction ID" value="UER00468"/>
</dbReference>
<dbReference type="Proteomes" id="UP000000818">
    <property type="component" value="Chromosome"/>
</dbReference>
<dbReference type="GO" id="GO:0005737">
    <property type="term" value="C:cytoplasm"/>
    <property type="evidence" value="ECO:0007669"/>
    <property type="project" value="UniProtKB-SubCell"/>
</dbReference>
<dbReference type="GO" id="GO:0004139">
    <property type="term" value="F:deoxyribose-phosphate aldolase activity"/>
    <property type="evidence" value="ECO:0007669"/>
    <property type="project" value="UniProtKB-UniRule"/>
</dbReference>
<dbReference type="GO" id="GO:0006018">
    <property type="term" value="P:2-deoxyribose 1-phosphate catabolic process"/>
    <property type="evidence" value="ECO:0007669"/>
    <property type="project" value="UniProtKB-UniRule"/>
</dbReference>
<dbReference type="GO" id="GO:0016052">
    <property type="term" value="P:carbohydrate catabolic process"/>
    <property type="evidence" value="ECO:0007669"/>
    <property type="project" value="TreeGrafter"/>
</dbReference>
<dbReference type="GO" id="GO:0009264">
    <property type="term" value="P:deoxyribonucleotide catabolic process"/>
    <property type="evidence" value="ECO:0007669"/>
    <property type="project" value="InterPro"/>
</dbReference>
<dbReference type="CDD" id="cd00959">
    <property type="entry name" value="DeoC"/>
    <property type="match status" value="1"/>
</dbReference>
<dbReference type="FunFam" id="3.20.20.70:FF:000044">
    <property type="entry name" value="Deoxyribose-phosphate aldolase"/>
    <property type="match status" value="1"/>
</dbReference>
<dbReference type="Gene3D" id="3.20.20.70">
    <property type="entry name" value="Aldolase class I"/>
    <property type="match status" value="1"/>
</dbReference>
<dbReference type="HAMAP" id="MF_00114">
    <property type="entry name" value="DeoC_type1"/>
    <property type="match status" value="1"/>
</dbReference>
<dbReference type="InterPro" id="IPR013785">
    <property type="entry name" value="Aldolase_TIM"/>
</dbReference>
<dbReference type="InterPro" id="IPR011343">
    <property type="entry name" value="DeoC"/>
</dbReference>
<dbReference type="InterPro" id="IPR002915">
    <property type="entry name" value="DeoC/FbaB/LacD_aldolase"/>
</dbReference>
<dbReference type="InterPro" id="IPR028581">
    <property type="entry name" value="DeoC_typeI"/>
</dbReference>
<dbReference type="NCBIfam" id="TIGR00126">
    <property type="entry name" value="deoC"/>
    <property type="match status" value="1"/>
</dbReference>
<dbReference type="PANTHER" id="PTHR10889">
    <property type="entry name" value="DEOXYRIBOSE-PHOSPHATE ALDOLASE"/>
    <property type="match status" value="1"/>
</dbReference>
<dbReference type="PANTHER" id="PTHR10889:SF1">
    <property type="entry name" value="DEOXYRIBOSE-PHOSPHATE ALDOLASE"/>
    <property type="match status" value="1"/>
</dbReference>
<dbReference type="Pfam" id="PF01791">
    <property type="entry name" value="DeoC"/>
    <property type="match status" value="1"/>
</dbReference>
<dbReference type="PIRSF" id="PIRSF001357">
    <property type="entry name" value="DeoC"/>
    <property type="match status" value="1"/>
</dbReference>
<dbReference type="SMART" id="SM01133">
    <property type="entry name" value="DeoC"/>
    <property type="match status" value="1"/>
</dbReference>
<dbReference type="SUPFAM" id="SSF51569">
    <property type="entry name" value="Aldolase"/>
    <property type="match status" value="1"/>
</dbReference>
<sequence length="224" mass="23926">MDKQQLAKMIDHTILKPEADKASIEKLCKEALEYNFASVCINPTNVELAAKLLKGSEVKVCTVIGFPLGANTMEVKAFETKDAIAKGADEVDMVINIGRLKDKDYEYVEKDIKAVVDAADKKALTKVIIETCLLTEEEKVKACELAKKAGADFVKTSTGFSTGGATPEDIKLMRETVGPEMGVKASGGVRSIEDAEAVIKNGATRIGASASIAICEGKVSDSTY</sequence>